<dbReference type="EC" id="2.7.4.9" evidence="1"/>
<dbReference type="EMBL" id="CT971583">
    <property type="protein sequence ID" value="CAK24670.1"/>
    <property type="molecule type" value="Genomic_DNA"/>
</dbReference>
<dbReference type="SMR" id="A5GP05"/>
<dbReference type="STRING" id="32051.SynWH7803_2244"/>
<dbReference type="KEGG" id="syx:SynWH7803_2244"/>
<dbReference type="eggNOG" id="COG0125">
    <property type="taxonomic scope" value="Bacteria"/>
</dbReference>
<dbReference type="HOGENOM" id="CLU_049131_0_0_3"/>
<dbReference type="OrthoDB" id="9774907at2"/>
<dbReference type="Proteomes" id="UP000001566">
    <property type="component" value="Chromosome"/>
</dbReference>
<dbReference type="GO" id="GO:0005829">
    <property type="term" value="C:cytosol"/>
    <property type="evidence" value="ECO:0007669"/>
    <property type="project" value="TreeGrafter"/>
</dbReference>
<dbReference type="GO" id="GO:0005524">
    <property type="term" value="F:ATP binding"/>
    <property type="evidence" value="ECO:0007669"/>
    <property type="project" value="UniProtKB-UniRule"/>
</dbReference>
<dbReference type="GO" id="GO:0004798">
    <property type="term" value="F:dTMP kinase activity"/>
    <property type="evidence" value="ECO:0007669"/>
    <property type="project" value="UniProtKB-UniRule"/>
</dbReference>
<dbReference type="GO" id="GO:0006233">
    <property type="term" value="P:dTDP biosynthetic process"/>
    <property type="evidence" value="ECO:0007669"/>
    <property type="project" value="InterPro"/>
</dbReference>
<dbReference type="GO" id="GO:0006235">
    <property type="term" value="P:dTTP biosynthetic process"/>
    <property type="evidence" value="ECO:0007669"/>
    <property type="project" value="UniProtKB-UniRule"/>
</dbReference>
<dbReference type="GO" id="GO:0006227">
    <property type="term" value="P:dUDP biosynthetic process"/>
    <property type="evidence" value="ECO:0007669"/>
    <property type="project" value="TreeGrafter"/>
</dbReference>
<dbReference type="CDD" id="cd01672">
    <property type="entry name" value="TMPK"/>
    <property type="match status" value="1"/>
</dbReference>
<dbReference type="FunFam" id="3.40.50.300:FF:000225">
    <property type="entry name" value="Thymidylate kinase"/>
    <property type="match status" value="1"/>
</dbReference>
<dbReference type="Gene3D" id="3.40.50.300">
    <property type="entry name" value="P-loop containing nucleotide triphosphate hydrolases"/>
    <property type="match status" value="1"/>
</dbReference>
<dbReference type="HAMAP" id="MF_00165">
    <property type="entry name" value="Thymidylate_kinase"/>
    <property type="match status" value="1"/>
</dbReference>
<dbReference type="InterPro" id="IPR027417">
    <property type="entry name" value="P-loop_NTPase"/>
</dbReference>
<dbReference type="InterPro" id="IPR039430">
    <property type="entry name" value="Thymidylate_kin-like_dom"/>
</dbReference>
<dbReference type="InterPro" id="IPR018095">
    <property type="entry name" value="Thymidylate_kin_CS"/>
</dbReference>
<dbReference type="InterPro" id="IPR018094">
    <property type="entry name" value="Thymidylate_kinase"/>
</dbReference>
<dbReference type="NCBIfam" id="TIGR00041">
    <property type="entry name" value="DTMP_kinase"/>
    <property type="match status" value="1"/>
</dbReference>
<dbReference type="PANTHER" id="PTHR10344">
    <property type="entry name" value="THYMIDYLATE KINASE"/>
    <property type="match status" value="1"/>
</dbReference>
<dbReference type="PANTHER" id="PTHR10344:SF4">
    <property type="entry name" value="UMP-CMP KINASE 2, MITOCHONDRIAL"/>
    <property type="match status" value="1"/>
</dbReference>
<dbReference type="Pfam" id="PF02223">
    <property type="entry name" value="Thymidylate_kin"/>
    <property type="match status" value="1"/>
</dbReference>
<dbReference type="SUPFAM" id="SSF52540">
    <property type="entry name" value="P-loop containing nucleoside triphosphate hydrolases"/>
    <property type="match status" value="1"/>
</dbReference>
<dbReference type="PROSITE" id="PS01331">
    <property type="entry name" value="THYMIDYLATE_KINASE"/>
    <property type="match status" value="1"/>
</dbReference>
<proteinExistence type="inferred from homology"/>
<evidence type="ECO:0000255" key="1">
    <source>
        <dbReference type="HAMAP-Rule" id="MF_00165"/>
    </source>
</evidence>
<reference key="1">
    <citation type="submission" date="2006-05" db="EMBL/GenBank/DDBJ databases">
        <authorList>
            <consortium name="Genoscope"/>
        </authorList>
    </citation>
    <scope>NUCLEOTIDE SEQUENCE [LARGE SCALE GENOMIC DNA]</scope>
    <source>
        <strain>WH7803</strain>
    </source>
</reference>
<accession>A5GP05</accession>
<name>KTHY_SYNPW</name>
<organism>
    <name type="scientific">Synechococcus sp. (strain WH7803)</name>
    <dbReference type="NCBI Taxonomy" id="32051"/>
    <lineage>
        <taxon>Bacteria</taxon>
        <taxon>Bacillati</taxon>
        <taxon>Cyanobacteriota</taxon>
        <taxon>Cyanophyceae</taxon>
        <taxon>Synechococcales</taxon>
        <taxon>Synechococcaceae</taxon>
        <taxon>Synechococcus</taxon>
    </lineage>
</organism>
<comment type="function">
    <text evidence="1">Phosphorylation of dTMP to form dTDP in both de novo and salvage pathways of dTTP synthesis.</text>
</comment>
<comment type="catalytic activity">
    <reaction evidence="1">
        <text>dTMP + ATP = dTDP + ADP</text>
        <dbReference type="Rhea" id="RHEA:13517"/>
        <dbReference type="ChEBI" id="CHEBI:30616"/>
        <dbReference type="ChEBI" id="CHEBI:58369"/>
        <dbReference type="ChEBI" id="CHEBI:63528"/>
        <dbReference type="ChEBI" id="CHEBI:456216"/>
        <dbReference type="EC" id="2.7.4.9"/>
    </reaction>
</comment>
<comment type="similarity">
    <text evidence="1">Belongs to the thymidylate kinase family.</text>
</comment>
<protein>
    <recommendedName>
        <fullName evidence="1">Thymidylate kinase</fullName>
        <ecNumber evidence="1">2.7.4.9</ecNumber>
    </recommendedName>
    <alternativeName>
        <fullName evidence="1">dTMP kinase</fullName>
    </alternativeName>
</protein>
<keyword id="KW-0067">ATP-binding</keyword>
<keyword id="KW-0418">Kinase</keyword>
<keyword id="KW-0545">Nucleotide biosynthesis</keyword>
<keyword id="KW-0547">Nucleotide-binding</keyword>
<keyword id="KW-1185">Reference proteome</keyword>
<keyword id="KW-0808">Transferase</keyword>
<feature type="chain" id="PRO_1000023300" description="Thymidylate kinase">
    <location>
        <begin position="1"/>
        <end position="213"/>
    </location>
</feature>
<feature type="binding site" evidence="1">
    <location>
        <begin position="10"/>
        <end position="17"/>
    </location>
    <ligand>
        <name>ATP</name>
        <dbReference type="ChEBI" id="CHEBI:30616"/>
    </ligand>
</feature>
<gene>
    <name evidence="1" type="primary">tmk</name>
    <name type="ordered locus">SynWH7803_2244</name>
</gene>
<sequence>MKGRFLVLEGIDGCGKTTQLRQLAEWLPDSGLMPEGATLHLTREPGGTPLGRALRELLLHPPDEAAPCPEAELLMYAADRAQHVQRRILPALACGDWVLSDRFSGSTLAYQGDGRGLDRALILDLERIATAGLVPDVTLWLDLSLEASMARREERTEDRIEAEGQAFLARVADGFRQLAAERGWVGIPAALSPKEVHQAIRLALEGHAALRRR</sequence>